<protein>
    <recommendedName>
        <fullName evidence="1">Exodeoxyribonuclease 7 small subunit</fullName>
        <ecNumber evidence="1">3.1.11.6</ecNumber>
    </recommendedName>
    <alternativeName>
        <fullName evidence="1">Exodeoxyribonuclease VII small subunit</fullName>
        <shortName evidence="1">Exonuclease VII small subunit</shortName>
    </alternativeName>
</protein>
<organism>
    <name type="scientific">Burkholderia lata (strain ATCC 17760 / DSM 23089 / LMG 22485 / NCIMB 9086 / R18194 / 383)</name>
    <dbReference type="NCBI Taxonomy" id="482957"/>
    <lineage>
        <taxon>Bacteria</taxon>
        <taxon>Pseudomonadati</taxon>
        <taxon>Pseudomonadota</taxon>
        <taxon>Betaproteobacteria</taxon>
        <taxon>Burkholderiales</taxon>
        <taxon>Burkholderiaceae</taxon>
        <taxon>Burkholderia</taxon>
        <taxon>Burkholderia cepacia complex</taxon>
    </lineage>
</organism>
<sequence length="97" mass="10166">MAKTASPGATPPGNGTEPLPDNYEMALAELETLVARMEGGALSLEDSLTAYRRGATLVAFCQQQLEKVEQQVRVLDGATLKPLSSGTAATDGEDDDL</sequence>
<comment type="function">
    <text evidence="1">Bidirectionally degrades single-stranded DNA into large acid-insoluble oligonucleotides, which are then degraded further into small acid-soluble oligonucleotides.</text>
</comment>
<comment type="catalytic activity">
    <reaction evidence="1">
        <text>Exonucleolytic cleavage in either 5'- to 3'- or 3'- to 5'-direction to yield nucleoside 5'-phosphates.</text>
        <dbReference type="EC" id="3.1.11.6"/>
    </reaction>
</comment>
<comment type="subunit">
    <text evidence="1">Heterooligomer composed of large and small subunits.</text>
</comment>
<comment type="subcellular location">
    <subcellularLocation>
        <location evidence="1">Cytoplasm</location>
    </subcellularLocation>
</comment>
<comment type="similarity">
    <text evidence="1">Belongs to the XseB family.</text>
</comment>
<name>EX7S_BURL3</name>
<accession>Q393P2</accession>
<keyword id="KW-0963">Cytoplasm</keyword>
<keyword id="KW-0269">Exonuclease</keyword>
<keyword id="KW-0378">Hydrolase</keyword>
<keyword id="KW-0540">Nuclease</keyword>
<evidence type="ECO:0000255" key="1">
    <source>
        <dbReference type="HAMAP-Rule" id="MF_00337"/>
    </source>
</evidence>
<evidence type="ECO:0000256" key="2">
    <source>
        <dbReference type="SAM" id="MobiDB-lite"/>
    </source>
</evidence>
<reference key="1">
    <citation type="submission" date="2005-10" db="EMBL/GenBank/DDBJ databases">
        <title>Complete sequence of chromosome 2 of Burkholderia sp. 383.</title>
        <authorList>
            <consortium name="US DOE Joint Genome Institute"/>
            <person name="Copeland A."/>
            <person name="Lucas S."/>
            <person name="Lapidus A."/>
            <person name="Barry K."/>
            <person name="Detter J.C."/>
            <person name="Glavina T."/>
            <person name="Hammon N."/>
            <person name="Israni S."/>
            <person name="Pitluck S."/>
            <person name="Chain P."/>
            <person name="Malfatti S."/>
            <person name="Shin M."/>
            <person name="Vergez L."/>
            <person name="Schmutz J."/>
            <person name="Larimer F."/>
            <person name="Land M."/>
            <person name="Kyrpides N."/>
            <person name="Lykidis A."/>
            <person name="Richardson P."/>
        </authorList>
    </citation>
    <scope>NUCLEOTIDE SEQUENCE [LARGE SCALE GENOMIC DNA]</scope>
    <source>
        <strain>ATCC 17760 / DSM 23089 / LMG 22485 / NCIMB 9086 / R18194 / 383</strain>
    </source>
</reference>
<proteinExistence type="inferred from homology"/>
<gene>
    <name evidence="1" type="primary">xseB</name>
    <name type="ordered locus">Bcep18194_B2213</name>
</gene>
<feature type="chain" id="PRO_0000303697" description="Exodeoxyribonuclease 7 small subunit">
    <location>
        <begin position="1"/>
        <end position="97"/>
    </location>
</feature>
<feature type="region of interest" description="Disordered" evidence="2">
    <location>
        <begin position="1"/>
        <end position="22"/>
    </location>
</feature>
<dbReference type="EC" id="3.1.11.6" evidence="1"/>
<dbReference type="EMBL" id="CP000152">
    <property type="protein sequence ID" value="ABB12324.1"/>
    <property type="molecule type" value="Genomic_DNA"/>
</dbReference>
<dbReference type="RefSeq" id="WP_011355806.1">
    <property type="nucleotide sequence ID" value="NZ_WNDV01000006.1"/>
</dbReference>
<dbReference type="SMR" id="Q393P2"/>
<dbReference type="GeneID" id="45098538"/>
<dbReference type="KEGG" id="bur:Bcep18194_B2213"/>
<dbReference type="HOGENOM" id="CLU_145918_2_0_4"/>
<dbReference type="Proteomes" id="UP000002705">
    <property type="component" value="Chromosome 2"/>
</dbReference>
<dbReference type="GO" id="GO:0005829">
    <property type="term" value="C:cytosol"/>
    <property type="evidence" value="ECO:0007669"/>
    <property type="project" value="TreeGrafter"/>
</dbReference>
<dbReference type="GO" id="GO:0009318">
    <property type="term" value="C:exodeoxyribonuclease VII complex"/>
    <property type="evidence" value="ECO:0007669"/>
    <property type="project" value="InterPro"/>
</dbReference>
<dbReference type="GO" id="GO:0008855">
    <property type="term" value="F:exodeoxyribonuclease VII activity"/>
    <property type="evidence" value="ECO:0007669"/>
    <property type="project" value="UniProtKB-UniRule"/>
</dbReference>
<dbReference type="GO" id="GO:0006308">
    <property type="term" value="P:DNA catabolic process"/>
    <property type="evidence" value="ECO:0007669"/>
    <property type="project" value="UniProtKB-UniRule"/>
</dbReference>
<dbReference type="Gene3D" id="1.10.287.1040">
    <property type="entry name" value="Exonuclease VII, small subunit"/>
    <property type="match status" value="1"/>
</dbReference>
<dbReference type="HAMAP" id="MF_00337">
    <property type="entry name" value="Exonuc_7_S"/>
    <property type="match status" value="1"/>
</dbReference>
<dbReference type="InterPro" id="IPR003761">
    <property type="entry name" value="Exonuc_VII_S"/>
</dbReference>
<dbReference type="InterPro" id="IPR037004">
    <property type="entry name" value="Exonuc_VII_ssu_sf"/>
</dbReference>
<dbReference type="NCBIfam" id="NF002141">
    <property type="entry name" value="PRK00977.1-5"/>
    <property type="match status" value="1"/>
</dbReference>
<dbReference type="NCBIfam" id="TIGR01280">
    <property type="entry name" value="xseB"/>
    <property type="match status" value="1"/>
</dbReference>
<dbReference type="PANTHER" id="PTHR34137">
    <property type="entry name" value="EXODEOXYRIBONUCLEASE 7 SMALL SUBUNIT"/>
    <property type="match status" value="1"/>
</dbReference>
<dbReference type="PANTHER" id="PTHR34137:SF1">
    <property type="entry name" value="EXODEOXYRIBONUCLEASE 7 SMALL SUBUNIT"/>
    <property type="match status" value="1"/>
</dbReference>
<dbReference type="Pfam" id="PF02609">
    <property type="entry name" value="Exonuc_VII_S"/>
    <property type="match status" value="1"/>
</dbReference>
<dbReference type="SUPFAM" id="SSF116842">
    <property type="entry name" value="XseB-like"/>
    <property type="match status" value="1"/>
</dbReference>